<name>RNFE_ALIFM</name>
<protein>
    <recommendedName>
        <fullName evidence="1">Ion-translocating oxidoreductase complex subunit E</fullName>
        <ecNumber evidence="1">7.-.-.-</ecNumber>
    </recommendedName>
    <alternativeName>
        <fullName evidence="1">Rnf electron transport complex subunit E</fullName>
    </alternativeName>
</protein>
<reference key="1">
    <citation type="submission" date="2008-08" db="EMBL/GenBank/DDBJ databases">
        <title>Complete sequence of Vibrio fischeri strain MJ11.</title>
        <authorList>
            <person name="Mandel M.J."/>
            <person name="Stabb E.V."/>
            <person name="Ruby E.G."/>
            <person name="Ferriera S."/>
            <person name="Johnson J."/>
            <person name="Kravitz S."/>
            <person name="Beeson K."/>
            <person name="Sutton G."/>
            <person name="Rogers Y.-H."/>
            <person name="Friedman R."/>
            <person name="Frazier M."/>
            <person name="Venter J.C."/>
        </authorList>
    </citation>
    <scope>NUCLEOTIDE SEQUENCE [LARGE SCALE GENOMIC DNA]</scope>
    <source>
        <strain>MJ11</strain>
    </source>
</reference>
<evidence type="ECO:0000255" key="1">
    <source>
        <dbReference type="HAMAP-Rule" id="MF_00478"/>
    </source>
</evidence>
<keyword id="KW-0997">Cell inner membrane</keyword>
<keyword id="KW-1003">Cell membrane</keyword>
<keyword id="KW-0249">Electron transport</keyword>
<keyword id="KW-0472">Membrane</keyword>
<keyword id="KW-1278">Translocase</keyword>
<keyword id="KW-0812">Transmembrane</keyword>
<keyword id="KW-1133">Transmembrane helix</keyword>
<keyword id="KW-0813">Transport</keyword>
<gene>
    <name evidence="1" type="primary">rnfE</name>
    <name type="ordered locus">VFMJ11_0969</name>
</gene>
<proteinExistence type="inferred from homology"/>
<comment type="function">
    <text evidence="1">Part of a membrane-bound complex that couples electron transfer with translocation of ions across the membrane.</text>
</comment>
<comment type="subunit">
    <text evidence="1">The complex is composed of six subunits: RnfA, RnfB, RnfC, RnfD, RnfE and RnfG.</text>
</comment>
<comment type="subcellular location">
    <subcellularLocation>
        <location evidence="1">Cell inner membrane</location>
        <topology evidence="1">Multi-pass membrane protein</topology>
    </subcellularLocation>
</comment>
<comment type="similarity">
    <text evidence="1">Belongs to the NqrDE/RnfAE family.</text>
</comment>
<accession>B5FCN0</accession>
<sequence length="227" mass="24569">MASHKELIKNGLWDNNPALVQLLGLCPLLAVSATVTNALGLGIATILVLVGSNLIVSLVRQWIPQEVRIPVFVMIIASLVTCVQLLMNAYAYGLYLSLGIFIPLIVTNCIIIGRAESFASKNDPLPAVLDGLWMGMGMTAVLVLLGAMREILGNGTLFDGADLLLGDWATILRIELFHVDSHFLLAMLPPGAFLGVGFLIALKNVIDKKMADRQPKEKAEIERVRIS</sequence>
<organism>
    <name type="scientific">Aliivibrio fischeri (strain MJ11)</name>
    <name type="common">Vibrio fischeri</name>
    <dbReference type="NCBI Taxonomy" id="388396"/>
    <lineage>
        <taxon>Bacteria</taxon>
        <taxon>Pseudomonadati</taxon>
        <taxon>Pseudomonadota</taxon>
        <taxon>Gammaproteobacteria</taxon>
        <taxon>Vibrionales</taxon>
        <taxon>Vibrionaceae</taxon>
        <taxon>Aliivibrio</taxon>
    </lineage>
</organism>
<dbReference type="EC" id="7.-.-.-" evidence="1"/>
<dbReference type="EMBL" id="CP001139">
    <property type="protein sequence ID" value="ACH65321.1"/>
    <property type="molecule type" value="Genomic_DNA"/>
</dbReference>
<dbReference type="RefSeq" id="WP_012532973.1">
    <property type="nucleotide sequence ID" value="NC_011184.1"/>
</dbReference>
<dbReference type="SMR" id="B5FCN0"/>
<dbReference type="KEGG" id="vfm:VFMJ11_0969"/>
<dbReference type="HOGENOM" id="CLU_046659_1_0_6"/>
<dbReference type="Proteomes" id="UP000001857">
    <property type="component" value="Chromosome I"/>
</dbReference>
<dbReference type="GO" id="GO:0005886">
    <property type="term" value="C:plasma membrane"/>
    <property type="evidence" value="ECO:0007669"/>
    <property type="project" value="UniProtKB-SubCell"/>
</dbReference>
<dbReference type="GO" id="GO:0022900">
    <property type="term" value="P:electron transport chain"/>
    <property type="evidence" value="ECO:0007669"/>
    <property type="project" value="UniProtKB-UniRule"/>
</dbReference>
<dbReference type="HAMAP" id="MF_00478">
    <property type="entry name" value="RsxE_RnfE"/>
    <property type="match status" value="1"/>
</dbReference>
<dbReference type="InterPro" id="IPR003667">
    <property type="entry name" value="NqrDE/RnfAE"/>
</dbReference>
<dbReference type="InterPro" id="IPR010968">
    <property type="entry name" value="RnfE"/>
</dbReference>
<dbReference type="NCBIfam" id="NF009070">
    <property type="entry name" value="PRK12405.1"/>
    <property type="match status" value="1"/>
</dbReference>
<dbReference type="NCBIfam" id="TIGR01948">
    <property type="entry name" value="rnfE"/>
    <property type="match status" value="1"/>
</dbReference>
<dbReference type="PANTHER" id="PTHR30586">
    <property type="entry name" value="ELECTRON TRANSPORT COMPLEX PROTEIN RNFE"/>
    <property type="match status" value="1"/>
</dbReference>
<dbReference type="PANTHER" id="PTHR30586:SF0">
    <property type="entry name" value="ION-TRANSLOCATING OXIDOREDUCTASE COMPLEX SUBUNIT E"/>
    <property type="match status" value="1"/>
</dbReference>
<dbReference type="Pfam" id="PF02508">
    <property type="entry name" value="Rnf-Nqr"/>
    <property type="match status" value="1"/>
</dbReference>
<dbReference type="PIRSF" id="PIRSF006102">
    <property type="entry name" value="NQR_DE"/>
    <property type="match status" value="1"/>
</dbReference>
<feature type="chain" id="PRO_1000125868" description="Ion-translocating oxidoreductase complex subunit E">
    <location>
        <begin position="1"/>
        <end position="227"/>
    </location>
</feature>
<feature type="transmembrane region" description="Helical" evidence="1">
    <location>
        <begin position="18"/>
        <end position="38"/>
    </location>
</feature>
<feature type="transmembrane region" description="Helical" evidence="1">
    <location>
        <begin position="39"/>
        <end position="59"/>
    </location>
</feature>
<feature type="transmembrane region" description="Helical" evidence="1">
    <location>
        <begin position="69"/>
        <end position="89"/>
    </location>
</feature>
<feature type="transmembrane region" description="Helical" evidence="1">
    <location>
        <begin position="93"/>
        <end position="113"/>
    </location>
</feature>
<feature type="transmembrane region" description="Helical" evidence="1">
    <location>
        <begin position="125"/>
        <end position="145"/>
    </location>
</feature>
<feature type="transmembrane region" description="Helical" evidence="1">
    <location>
        <begin position="182"/>
        <end position="202"/>
    </location>
</feature>